<comment type="function">
    <text evidence="1">Part of the Tol-Pal system, which plays a role in outer membrane invagination during cell division and is important for maintaining outer membrane integrity.</text>
</comment>
<comment type="subunit">
    <text evidence="1">The Tol-Pal system is composed of five core proteins: the inner membrane proteins TolA, TolQ and TolR, the periplasmic protein TolB and the outer membrane protein Pal. They form a network linking the inner and outer membranes and the peptidoglycan layer.</text>
</comment>
<comment type="subcellular location">
    <subcellularLocation>
        <location evidence="1">Periplasm</location>
    </subcellularLocation>
</comment>
<comment type="similarity">
    <text evidence="1">Belongs to the TolB family.</text>
</comment>
<comment type="sequence caution" evidence="2">
    <conflict type="erroneous initiation">
        <sequence resource="EMBL-CDS" id="AAS97574"/>
    </conflict>
</comment>
<reference key="1">
    <citation type="journal article" date="2004" name="Nat. Biotechnol.">
        <title>The genome sequence of the anaerobic, sulfate-reducing bacterium Desulfovibrio vulgaris Hildenborough.</title>
        <authorList>
            <person name="Heidelberg J.F."/>
            <person name="Seshadri R."/>
            <person name="Haveman S.A."/>
            <person name="Hemme C.L."/>
            <person name="Paulsen I.T."/>
            <person name="Kolonay J.F."/>
            <person name="Eisen J.A."/>
            <person name="Ward N.L."/>
            <person name="Methe B.A."/>
            <person name="Brinkac L.M."/>
            <person name="Daugherty S.C."/>
            <person name="DeBoy R.T."/>
            <person name="Dodson R.J."/>
            <person name="Durkin A.S."/>
            <person name="Madupu R."/>
            <person name="Nelson W.C."/>
            <person name="Sullivan S.A."/>
            <person name="Fouts D.E."/>
            <person name="Haft D.H."/>
            <person name="Selengut J."/>
            <person name="Peterson J.D."/>
            <person name="Davidsen T.M."/>
            <person name="Zafar N."/>
            <person name="Zhou L."/>
            <person name="Radune D."/>
            <person name="Dimitrov G."/>
            <person name="Hance M."/>
            <person name="Tran K."/>
            <person name="Khouri H.M."/>
            <person name="Gill J."/>
            <person name="Utterback T.R."/>
            <person name="Feldblyum T.V."/>
            <person name="Wall J.D."/>
            <person name="Voordouw G."/>
            <person name="Fraser C.M."/>
        </authorList>
    </citation>
    <scope>NUCLEOTIDE SEQUENCE [LARGE SCALE GENOMIC DNA]</scope>
    <source>
        <strain>ATCC 29579 / DSM 644 / CCUG 34227 / NCIMB 8303 / VKM B-1760 / Hildenborough</strain>
    </source>
</reference>
<dbReference type="EMBL" id="AE017285">
    <property type="protein sequence ID" value="AAS97574.1"/>
    <property type="status" value="ALT_INIT"/>
    <property type="molecule type" value="Genomic_DNA"/>
</dbReference>
<dbReference type="RefSeq" id="YP_012314.1">
    <property type="nucleotide sequence ID" value="NC_002937.3"/>
</dbReference>
<dbReference type="SMR" id="Q726K4"/>
<dbReference type="STRING" id="882.DVU_3103"/>
<dbReference type="PaxDb" id="882-DVU_3103"/>
<dbReference type="EnsemblBacteria" id="AAS97574">
    <property type="protein sequence ID" value="AAS97574"/>
    <property type="gene ID" value="DVU_3103"/>
</dbReference>
<dbReference type="KEGG" id="dvu:DVU_3103"/>
<dbReference type="PATRIC" id="fig|882.5.peg.2814"/>
<dbReference type="eggNOG" id="COG0823">
    <property type="taxonomic scope" value="Bacteria"/>
</dbReference>
<dbReference type="HOGENOM" id="CLU_047123_2_0_7"/>
<dbReference type="OrthoDB" id="9815657at2"/>
<dbReference type="PhylomeDB" id="Q726K4"/>
<dbReference type="Proteomes" id="UP000002194">
    <property type="component" value="Chromosome"/>
</dbReference>
<dbReference type="GO" id="GO:0042597">
    <property type="term" value="C:periplasmic space"/>
    <property type="evidence" value="ECO:0007669"/>
    <property type="project" value="UniProtKB-SubCell"/>
</dbReference>
<dbReference type="GO" id="GO:0051301">
    <property type="term" value="P:cell division"/>
    <property type="evidence" value="ECO:0007669"/>
    <property type="project" value="UniProtKB-KW"/>
</dbReference>
<dbReference type="GO" id="GO:0017038">
    <property type="term" value="P:protein import"/>
    <property type="evidence" value="ECO:0007669"/>
    <property type="project" value="InterPro"/>
</dbReference>
<dbReference type="Gene3D" id="2.120.10.30">
    <property type="entry name" value="TolB, C-terminal domain"/>
    <property type="match status" value="2"/>
</dbReference>
<dbReference type="Gene3D" id="3.40.50.10070">
    <property type="entry name" value="TolB, N-terminal domain"/>
    <property type="match status" value="1"/>
</dbReference>
<dbReference type="HAMAP" id="MF_00671">
    <property type="entry name" value="TolB"/>
    <property type="match status" value="1"/>
</dbReference>
<dbReference type="InterPro" id="IPR011042">
    <property type="entry name" value="6-blade_b-propeller_TolB-like"/>
</dbReference>
<dbReference type="InterPro" id="IPR011659">
    <property type="entry name" value="PD40"/>
</dbReference>
<dbReference type="InterPro" id="IPR014167">
    <property type="entry name" value="Tol-Pal_TolB"/>
</dbReference>
<dbReference type="NCBIfam" id="TIGR02800">
    <property type="entry name" value="propeller_TolB"/>
    <property type="match status" value="1"/>
</dbReference>
<dbReference type="PANTHER" id="PTHR36842:SF1">
    <property type="entry name" value="PROTEIN TOLB"/>
    <property type="match status" value="1"/>
</dbReference>
<dbReference type="PANTHER" id="PTHR36842">
    <property type="entry name" value="PROTEIN TOLB HOMOLOG"/>
    <property type="match status" value="1"/>
</dbReference>
<dbReference type="Pfam" id="PF07676">
    <property type="entry name" value="PD40"/>
    <property type="match status" value="4"/>
</dbReference>
<dbReference type="SUPFAM" id="SSF82171">
    <property type="entry name" value="DPP6 N-terminal domain-like"/>
    <property type="match status" value="1"/>
</dbReference>
<dbReference type="SUPFAM" id="SSF52964">
    <property type="entry name" value="TolB, N-terminal domain"/>
    <property type="match status" value="1"/>
</dbReference>
<organism>
    <name type="scientific">Nitratidesulfovibrio vulgaris (strain ATCC 29579 / DSM 644 / CCUG 34227 / NCIMB 8303 / VKM B-1760 / Hildenborough)</name>
    <name type="common">Desulfovibrio vulgaris</name>
    <dbReference type="NCBI Taxonomy" id="882"/>
    <lineage>
        <taxon>Bacteria</taxon>
        <taxon>Pseudomonadati</taxon>
        <taxon>Thermodesulfobacteriota</taxon>
        <taxon>Desulfovibrionia</taxon>
        <taxon>Desulfovibrionales</taxon>
        <taxon>Desulfovibrionaceae</taxon>
        <taxon>Nitratidesulfovibrio</taxon>
    </lineage>
</organism>
<name>TOLB_NITV2</name>
<gene>
    <name evidence="1" type="primary">tolB</name>
    <name type="ordered locus">DVU_3103</name>
</gene>
<accession>Q726K4</accession>
<evidence type="ECO:0000255" key="1">
    <source>
        <dbReference type="HAMAP-Rule" id="MF_00671"/>
    </source>
</evidence>
<evidence type="ECO:0000305" key="2"/>
<proteinExistence type="inferred from homology"/>
<feature type="signal peptide" evidence="1">
    <location>
        <begin position="1"/>
        <end position="26"/>
    </location>
</feature>
<feature type="chain" id="PRO_0000034646" description="Tol-Pal system protein TolB" evidence="1">
    <location>
        <begin position="27"/>
        <end position="442"/>
    </location>
</feature>
<sequence>MRHRSCFSLFAGLALVFCLAVGTAAAGPVQVDIYGPGQGSLNLAMAAPLGPTPGTPVSGMGVKLNGFINENLSFLPFLRLVDQRAILGGTVMQGYKSPDIDLKRFQLAGADLVVTAGWPQGDASGSFVELRVYEALSGKLVFGKAYSHVEDGLLPNVADRFCSDLMKALTGRGEFFKSTLAFVKHDGKNKRDVWLVKPVGRDLRKITNLPGEALSPSWSPDGRFVVFSHFDDRSHALGVWDRLTRQVQRIRFPGNTVIGPCFLPDNKVAVSLSSGRNPDIFLLNHLFKKERELEANPSINVSPSFDATGTKMAFTSSRMGGPQVFMKDMTTGQVTRISKTGSYNTEPSISPDGTLVAFTKMTDTGHRIFVYDMVTQSERQVSFGPGRDEQPSFAPDSYFLAFTSNRNGAQQIFLVTRHGGDPKRVPTGPGDASFARWGMIPE</sequence>
<protein>
    <recommendedName>
        <fullName evidence="1">Tol-Pal system protein TolB</fullName>
    </recommendedName>
</protein>
<keyword id="KW-0131">Cell cycle</keyword>
<keyword id="KW-0132">Cell division</keyword>
<keyword id="KW-0574">Periplasm</keyword>
<keyword id="KW-1185">Reference proteome</keyword>
<keyword id="KW-0732">Signal</keyword>